<organism>
    <name type="scientific">Pan troglodytes</name>
    <name type="common">Chimpanzee</name>
    <dbReference type="NCBI Taxonomy" id="9598"/>
    <lineage>
        <taxon>Eukaryota</taxon>
        <taxon>Metazoa</taxon>
        <taxon>Chordata</taxon>
        <taxon>Craniata</taxon>
        <taxon>Vertebrata</taxon>
        <taxon>Euteleostomi</taxon>
        <taxon>Mammalia</taxon>
        <taxon>Eutheria</taxon>
        <taxon>Euarchontoglires</taxon>
        <taxon>Primates</taxon>
        <taxon>Haplorrhini</taxon>
        <taxon>Catarrhini</taxon>
        <taxon>Hominidae</taxon>
        <taxon>Pan</taxon>
    </lineage>
</organism>
<accession>Q862Z6</accession>
<name>VATG1_PANTR</name>
<evidence type="ECO:0000250" key="1">
    <source>
        <dbReference type="UniProtKB" id="O75348"/>
    </source>
</evidence>
<evidence type="ECO:0000256" key="2">
    <source>
        <dbReference type="SAM" id="MobiDB-lite"/>
    </source>
</evidence>
<evidence type="ECO:0000305" key="3"/>
<comment type="function">
    <text evidence="1">Subunit of the V1 complex of vacuolar(H+)-ATPase (V-ATPase), a multisubunit enzyme composed of a peripheral complex (V1) that hydrolyzes ATP and a membrane integral complex (V0) that translocates protons (By similarity). V-ATPase is responsible for acidifying and maintaining the pH of intracellular compartments and in some cell types, is targeted to the plasma membrane, where it is responsible for acidifying the extracellular environment (By similarity). In aerobic conditions, involved in intracellular iron homeostasis, thus triggering the activity of Fe(2+) prolyl hydroxylase (PHD) enzymes, and leading to HIF1A hydroxylation and subsequent proteasomal degradation (By similarity).</text>
</comment>
<comment type="subunit">
    <text evidence="1">V-ATPase is a heteromultimeric enzyme made up of two complexes: the ATP-hydrolytic V1 complex and the proton translocation V0 complex (By similarity). The V1 complex consists of three catalytic AB heterodimers that form a heterohexamer, three peripheral stalks each consisting of EG heterodimers, one central rotor including subunits D and F, and the regulatory subunits C and H (By similarity). The proton translocation complex V0 consists of the proton transport subunit a, a ring of proteolipid subunits c9c'', rotary subunit d, subunits e and f, and the accessory subunits ATP6AP1/Ac45 and ATP6AP2/PRR (By similarity).</text>
</comment>
<comment type="subcellular location">
    <subcellularLocation>
        <location evidence="1">Apical cell membrane</location>
    </subcellularLocation>
</comment>
<comment type="similarity">
    <text evidence="3">Belongs to the V-ATPase G subunit family.</text>
</comment>
<protein>
    <recommendedName>
        <fullName>V-type proton ATPase subunit G 1</fullName>
        <shortName>V-ATPase subunit G 1</shortName>
    </recommendedName>
    <alternativeName>
        <fullName>Vacuolar proton pump subunit G 1</fullName>
    </alternativeName>
</protein>
<proteinExistence type="inferred from homology"/>
<reference key="1">
    <citation type="journal article" date="2002" name="Immunol. Rev.">
        <title>Comparative genomic analysis of the MHC: the evolution of class I duplication blocks, diversity and complexity from shark to man.</title>
        <authorList>
            <person name="Kulski J.K."/>
            <person name="Shiina T."/>
            <person name="Anzai T."/>
            <person name="Kohara S."/>
            <person name="Inoko H."/>
        </authorList>
    </citation>
    <scope>NUCLEOTIDE SEQUENCE [GENOMIC DNA]</scope>
</reference>
<reference key="2">
    <citation type="journal article" date="2003" name="Proc. Natl. Acad. Sci. U.S.A.">
        <title>Comparative sequencing of human and chimpanzee MHC class I regions unveils insertions/deletions as the major path to genomic divergence.</title>
        <authorList>
            <person name="Anzai T."/>
            <person name="Shiina T."/>
            <person name="Kimura N."/>
            <person name="Yanagiya K."/>
            <person name="Kohara S."/>
            <person name="Shigenari A."/>
            <person name="Yamagata T."/>
            <person name="Kulski J.K."/>
            <person name="Naruse T.K."/>
            <person name="Fujimori Y."/>
            <person name="Fukuzumi Y."/>
            <person name="Yamazaki M."/>
            <person name="Tashiro H."/>
            <person name="Iwamoto C."/>
            <person name="Umehara Y."/>
            <person name="Imanishi T."/>
            <person name="Meyer A."/>
            <person name="Ikeo K."/>
            <person name="Gojobori T."/>
            <person name="Bahram S."/>
            <person name="Inoko H."/>
        </authorList>
    </citation>
    <scope>NUCLEOTIDE SEQUENCE [LARGE SCALE GENOMIC DNA]</scope>
</reference>
<gene>
    <name type="primary">ATP6V1G1</name>
    <name type="synonym">ATP6G</name>
    <name type="synonym">ATP6G1</name>
</gene>
<dbReference type="EMBL" id="AB054536">
    <property type="protein sequence ID" value="BAB83885.1"/>
    <property type="molecule type" value="Genomic_DNA"/>
</dbReference>
<dbReference type="EMBL" id="BA000041">
    <property type="protein sequence ID" value="BAC78160.1"/>
    <property type="molecule type" value="Genomic_DNA"/>
</dbReference>
<dbReference type="SMR" id="Q862Z6"/>
<dbReference type="FunCoup" id="Q862Z6">
    <property type="interactions" value="956"/>
</dbReference>
<dbReference type="STRING" id="9598.ENSPTRP00000083048"/>
<dbReference type="PaxDb" id="9598-ENSPTRP00000030648"/>
<dbReference type="eggNOG" id="KOG1772">
    <property type="taxonomic scope" value="Eukaryota"/>
</dbReference>
<dbReference type="InParanoid" id="Q862Z6"/>
<dbReference type="Proteomes" id="UP000002277">
    <property type="component" value="Unplaced"/>
</dbReference>
<dbReference type="GO" id="GO:0016324">
    <property type="term" value="C:apical plasma membrane"/>
    <property type="evidence" value="ECO:0007669"/>
    <property type="project" value="UniProtKB-SubCell"/>
</dbReference>
<dbReference type="GO" id="GO:0005829">
    <property type="term" value="C:cytosol"/>
    <property type="evidence" value="ECO:0000250"/>
    <property type="project" value="UniProtKB"/>
</dbReference>
<dbReference type="GO" id="GO:0005886">
    <property type="term" value="C:plasma membrane"/>
    <property type="evidence" value="ECO:0000250"/>
    <property type="project" value="UniProtKB"/>
</dbReference>
<dbReference type="GO" id="GO:0030672">
    <property type="term" value="C:synaptic vesicle membrane"/>
    <property type="evidence" value="ECO:0000318"/>
    <property type="project" value="GO_Central"/>
</dbReference>
<dbReference type="GO" id="GO:0000221">
    <property type="term" value="C:vacuolar proton-transporting V-type ATPase, V1 domain"/>
    <property type="evidence" value="ECO:0000250"/>
    <property type="project" value="UniProtKB"/>
</dbReference>
<dbReference type="GO" id="GO:0016887">
    <property type="term" value="F:ATP hydrolysis activity"/>
    <property type="evidence" value="ECO:0000318"/>
    <property type="project" value="GO_Central"/>
</dbReference>
<dbReference type="GO" id="GO:0046961">
    <property type="term" value="F:proton-transporting ATPase activity, rotational mechanism"/>
    <property type="evidence" value="ECO:0000318"/>
    <property type="project" value="GO_Central"/>
</dbReference>
<dbReference type="GO" id="GO:0097401">
    <property type="term" value="P:synaptic vesicle lumen acidification"/>
    <property type="evidence" value="ECO:0000318"/>
    <property type="project" value="GO_Central"/>
</dbReference>
<dbReference type="FunFam" id="1.20.5.2950:FF:000001">
    <property type="entry name" value="V-type proton ATPase subunit G"/>
    <property type="match status" value="1"/>
</dbReference>
<dbReference type="FunFam" id="1.20.5.620:FF:000004">
    <property type="entry name" value="V-type proton ATPase subunit G"/>
    <property type="match status" value="1"/>
</dbReference>
<dbReference type="Gene3D" id="1.20.5.2950">
    <property type="match status" value="1"/>
</dbReference>
<dbReference type="InterPro" id="IPR005124">
    <property type="entry name" value="V-ATPase_G"/>
</dbReference>
<dbReference type="NCBIfam" id="TIGR01147">
    <property type="entry name" value="V_ATP_synt_G"/>
    <property type="match status" value="1"/>
</dbReference>
<dbReference type="PANTHER" id="PTHR12713:SF13">
    <property type="entry name" value="V-TYPE PROTON ATPASE SUBUNIT G 2"/>
    <property type="match status" value="1"/>
</dbReference>
<dbReference type="PANTHER" id="PTHR12713">
    <property type="entry name" value="VACUOLAR ATP SYNTHASE SUBUNIT G"/>
    <property type="match status" value="1"/>
</dbReference>
<dbReference type="Pfam" id="PF03179">
    <property type="entry name" value="V-ATPase_G"/>
    <property type="match status" value="1"/>
</dbReference>
<keyword id="KW-0007">Acetylation</keyword>
<keyword id="KW-1003">Cell membrane</keyword>
<keyword id="KW-0375">Hydrogen ion transport</keyword>
<keyword id="KW-0406">Ion transport</keyword>
<keyword id="KW-0472">Membrane</keyword>
<keyword id="KW-1185">Reference proteome</keyword>
<keyword id="KW-0813">Transport</keyword>
<sequence>MASQSQGIQQLLQAEKRAAEKVADARKRKARRLKQAKEEAQMEVEQYRREREHEFQSKQQAAMGSQGNLSAEVEQATRHQVQGMQSSQQRNRERVLAQLLGMVCDVRPQVHPNYRISA</sequence>
<feature type="initiator methionine" description="Removed" evidence="1">
    <location>
        <position position="1"/>
    </location>
</feature>
<feature type="chain" id="PRO_0000192899" description="V-type proton ATPase subunit G 1">
    <location>
        <begin position="2"/>
        <end position="118"/>
    </location>
</feature>
<feature type="region of interest" description="Disordered" evidence="2">
    <location>
        <begin position="25"/>
        <end position="90"/>
    </location>
</feature>
<feature type="compositionally biased region" description="Basic and acidic residues" evidence="2">
    <location>
        <begin position="35"/>
        <end position="56"/>
    </location>
</feature>
<feature type="compositionally biased region" description="Polar residues" evidence="2">
    <location>
        <begin position="57"/>
        <end position="69"/>
    </location>
</feature>
<feature type="compositionally biased region" description="Polar residues" evidence="2">
    <location>
        <begin position="78"/>
        <end position="89"/>
    </location>
</feature>
<feature type="modified residue" description="N-acetylalanine" evidence="1">
    <location>
        <position position="2"/>
    </location>
</feature>